<protein>
    <recommendedName>
        <fullName evidence="1">Putative gluconeogenesis factor</fullName>
    </recommendedName>
</protein>
<comment type="function">
    <text evidence="1">Required for morphogenesis under gluconeogenic growth conditions.</text>
</comment>
<comment type="subcellular location">
    <subcellularLocation>
        <location evidence="1">Cytoplasm</location>
    </subcellularLocation>
</comment>
<comment type="similarity">
    <text evidence="1">Belongs to the gluconeogenesis factor family.</text>
</comment>
<feature type="chain" id="PRO_0000107812" description="Putative gluconeogenesis factor">
    <location>
        <begin position="1"/>
        <end position="308"/>
    </location>
</feature>
<sequence>MSDLTRFTQYEHLDKVKKVVAIGGGHGLGRLMSALSFMKSRLTGIVTTTDNGGSTGRIRLNHGGIAWGDLRNCLNQIITEPSTASSLFEYRFTGQGELSGHNLGNLMLKALENMHIRPVEAIHLVRELLHVKSHIFPMSESPVHLAAVLQSGASIVGEVGIDNLTELPKSIFLVPLVKATPEAIEALQEADVILFGPGSFLTSILPPILLPEVIEALQKSHAKKIFIDNLALEQSPAASLSLSDRIQWIHHTVGKEIIDATIVPTNANDLCENLSLKVMVRPLQADDISYRHDRSLLSQAIDDLLGEL</sequence>
<proteinExistence type="inferred from homology"/>
<dbReference type="EMBL" id="AE004439">
    <property type="protein sequence ID" value="AAK02710.1"/>
    <property type="molecule type" value="Genomic_DNA"/>
</dbReference>
<dbReference type="RefSeq" id="WP_010906761.1">
    <property type="nucleotide sequence ID" value="NC_002663.1"/>
</dbReference>
<dbReference type="SMR" id="Q9CN20"/>
<dbReference type="STRING" id="272843.PM0626"/>
<dbReference type="EnsemblBacteria" id="AAK02710">
    <property type="protein sequence ID" value="AAK02710"/>
    <property type="gene ID" value="PM0626"/>
</dbReference>
<dbReference type="KEGG" id="pmu:PM0626"/>
<dbReference type="HOGENOM" id="CLU_044041_2_0_6"/>
<dbReference type="OrthoDB" id="9783842at2"/>
<dbReference type="Proteomes" id="UP000000809">
    <property type="component" value="Chromosome"/>
</dbReference>
<dbReference type="GO" id="GO:0005737">
    <property type="term" value="C:cytoplasm"/>
    <property type="evidence" value="ECO:0007669"/>
    <property type="project" value="UniProtKB-SubCell"/>
</dbReference>
<dbReference type="GO" id="GO:0043743">
    <property type="term" value="F:LPPG:FO 2-phospho-L-lactate transferase activity"/>
    <property type="evidence" value="ECO:0007669"/>
    <property type="project" value="InterPro"/>
</dbReference>
<dbReference type="GO" id="GO:0008360">
    <property type="term" value="P:regulation of cell shape"/>
    <property type="evidence" value="ECO:0007669"/>
    <property type="project" value="UniProtKB-UniRule"/>
</dbReference>
<dbReference type="CDD" id="cd07187">
    <property type="entry name" value="YvcK_like"/>
    <property type="match status" value="1"/>
</dbReference>
<dbReference type="Gene3D" id="3.40.50.10680">
    <property type="entry name" value="CofD-like domains"/>
    <property type="match status" value="1"/>
</dbReference>
<dbReference type="HAMAP" id="MF_00973">
    <property type="entry name" value="Gluconeogen_factor"/>
    <property type="match status" value="1"/>
</dbReference>
<dbReference type="InterPro" id="IPR002882">
    <property type="entry name" value="CofD"/>
</dbReference>
<dbReference type="InterPro" id="IPR038136">
    <property type="entry name" value="CofD-like_dom_sf"/>
</dbReference>
<dbReference type="InterPro" id="IPR010119">
    <property type="entry name" value="Gluconeogen_factor"/>
</dbReference>
<dbReference type="NCBIfam" id="TIGR01826">
    <property type="entry name" value="CofD_related"/>
    <property type="match status" value="1"/>
</dbReference>
<dbReference type="PANTHER" id="PTHR30135:SF3">
    <property type="entry name" value="GLUCONEOGENESIS FACTOR-RELATED"/>
    <property type="match status" value="1"/>
</dbReference>
<dbReference type="PANTHER" id="PTHR30135">
    <property type="entry name" value="UNCHARACTERIZED PROTEIN YVCK-RELATED"/>
    <property type="match status" value="1"/>
</dbReference>
<dbReference type="Pfam" id="PF01933">
    <property type="entry name" value="CofD"/>
    <property type="match status" value="1"/>
</dbReference>
<dbReference type="SUPFAM" id="SSF142338">
    <property type="entry name" value="CofD-like"/>
    <property type="match status" value="1"/>
</dbReference>
<organism>
    <name type="scientific">Pasteurella multocida (strain Pm70)</name>
    <dbReference type="NCBI Taxonomy" id="272843"/>
    <lineage>
        <taxon>Bacteria</taxon>
        <taxon>Pseudomonadati</taxon>
        <taxon>Pseudomonadota</taxon>
        <taxon>Gammaproteobacteria</taxon>
        <taxon>Pasteurellales</taxon>
        <taxon>Pasteurellaceae</taxon>
        <taxon>Pasteurella</taxon>
    </lineage>
</organism>
<accession>Q9CN20</accession>
<keyword id="KW-0963">Cytoplasm</keyword>
<keyword id="KW-1185">Reference proteome</keyword>
<name>GNGF_PASMU</name>
<gene>
    <name type="ordered locus">PM0626</name>
</gene>
<reference key="1">
    <citation type="journal article" date="2001" name="Proc. Natl. Acad. Sci. U.S.A.">
        <title>Complete genomic sequence of Pasteurella multocida Pm70.</title>
        <authorList>
            <person name="May B.J."/>
            <person name="Zhang Q."/>
            <person name="Li L.L."/>
            <person name="Paustian M.L."/>
            <person name="Whittam T.S."/>
            <person name="Kapur V."/>
        </authorList>
    </citation>
    <scope>NUCLEOTIDE SEQUENCE [LARGE SCALE GENOMIC DNA]</scope>
    <source>
        <strain>Pm70</strain>
    </source>
</reference>
<evidence type="ECO:0000255" key="1">
    <source>
        <dbReference type="HAMAP-Rule" id="MF_00973"/>
    </source>
</evidence>